<keyword id="KW-0067">ATP-binding</keyword>
<keyword id="KW-0235">DNA replication</keyword>
<keyword id="KW-0547">Nucleotide-binding</keyword>
<keyword id="KW-0539">Nucleus</keyword>
<keyword id="KW-1185">Reference proteome</keyword>
<evidence type="ECO:0000250" key="1"/>
<evidence type="ECO:0000255" key="2"/>
<evidence type="ECO:0000269" key="3">
    <source>
    </source>
</evidence>
<evidence type="ECO:0000305" key="4"/>
<protein>
    <recommendedName>
        <fullName>Replication factor C subunit 4</fullName>
        <shortName>OsRFC4</shortName>
    </recommendedName>
    <alternativeName>
        <fullName>Activator 1 subunit 4</fullName>
    </alternativeName>
</protein>
<gene>
    <name type="primary">RFC4</name>
    <name type="ordered locus">Os04g0569000</name>
    <name type="ordered locus">LOC_Os04g48060</name>
    <name type="ORF">OSJNBb0032E06.6</name>
</gene>
<organism>
    <name type="scientific">Oryza sativa subsp. japonica</name>
    <name type="common">Rice</name>
    <dbReference type="NCBI Taxonomy" id="39947"/>
    <lineage>
        <taxon>Eukaryota</taxon>
        <taxon>Viridiplantae</taxon>
        <taxon>Streptophyta</taxon>
        <taxon>Embryophyta</taxon>
        <taxon>Tracheophyta</taxon>
        <taxon>Spermatophyta</taxon>
        <taxon>Magnoliopsida</taxon>
        <taxon>Liliopsida</taxon>
        <taxon>Poales</taxon>
        <taxon>Poaceae</taxon>
        <taxon>BOP clade</taxon>
        <taxon>Oryzoideae</taxon>
        <taxon>Oryzeae</taxon>
        <taxon>Oryzinae</taxon>
        <taxon>Oryza</taxon>
        <taxon>Oryza sativa</taxon>
    </lineage>
</organism>
<comment type="function">
    <text evidence="1">May be involved in DNA replication and thus regulate cell proliferation.</text>
</comment>
<comment type="subunit">
    <text evidence="1">Heterotetramer of subunits RFC2, RFC3, RFC4 and RFC5 that can form a complex with RFC1.</text>
</comment>
<comment type="subcellular location">
    <subcellularLocation>
        <location evidence="1">Nucleus</location>
    </subcellularLocation>
</comment>
<comment type="tissue specificity">
    <text evidence="3">Expressed in roots, leaves, shoot apical meristem (SAM), flag leaves and panicles.</text>
</comment>
<comment type="induction">
    <text evidence="3">Down-regulated by sucrose starvation.</text>
</comment>
<comment type="similarity">
    <text evidence="4">Belongs to the activator 1 small subunits family.</text>
</comment>
<proteinExistence type="evidence at transcript level"/>
<sequence length="335" mass="36916">MDASSSSAPDLADAYDIPWVEKYRPTRVADVGGNSDAVARLQDIARDGNMPNLILSGPPGTGKTTSILSLAHELLGPSYREAVLELNASDDRGLDVVRNKIKMFAQKKVTLQPGRHKIVILDEADSMTSGAQQALRRTMEIYSNTTRFALACNTSSKIIEPIQSRCAIVRFSRLSDQEILGRLMIVVAAEKVPYVPEGLEAIIFTADGDMRQALNNLQATVSGFRFVNQENVFKVCDQPHPLHVKNMVKNVLDGKFDEACSALKQLYDLGYSPTDIITTLFRVIKNYDMAEYLKLELLKETGFAHMRICDGVGSFLQLSGLLAKFALVRETAKAS</sequence>
<dbReference type="EMBL" id="AB066661">
    <property type="protein sequence ID" value="BAB69675.1"/>
    <property type="molecule type" value="mRNA"/>
</dbReference>
<dbReference type="EMBL" id="AL663003">
    <property type="protein sequence ID" value="CAE02250.2"/>
    <property type="molecule type" value="Genomic_DNA"/>
</dbReference>
<dbReference type="EMBL" id="AP008210">
    <property type="protein sequence ID" value="BAF15508.1"/>
    <property type="molecule type" value="Genomic_DNA"/>
</dbReference>
<dbReference type="EMBL" id="AP014960">
    <property type="status" value="NOT_ANNOTATED_CDS"/>
    <property type="molecule type" value="Genomic_DNA"/>
</dbReference>
<dbReference type="SMR" id="Q7XRX1"/>
<dbReference type="FunCoup" id="Q7XRX1">
    <property type="interactions" value="1195"/>
</dbReference>
<dbReference type="STRING" id="39947.Q7XRX1"/>
<dbReference type="PaxDb" id="39947-Q7XRX1"/>
<dbReference type="KEGG" id="dosa:Os04g0569000"/>
<dbReference type="eggNOG" id="KOG0991">
    <property type="taxonomic scope" value="Eukaryota"/>
</dbReference>
<dbReference type="HOGENOM" id="CLU_042324_0_1_1"/>
<dbReference type="InParanoid" id="Q7XRX1"/>
<dbReference type="PlantReactome" id="R-OSA-9675815">
    <property type="pathway name" value="Leading strand synthesis"/>
</dbReference>
<dbReference type="Proteomes" id="UP000000763">
    <property type="component" value="Chromosome 4"/>
</dbReference>
<dbReference type="Proteomes" id="UP000059680">
    <property type="component" value="Chromosome 4"/>
</dbReference>
<dbReference type="GO" id="GO:0005663">
    <property type="term" value="C:DNA replication factor C complex"/>
    <property type="evidence" value="ECO:0000318"/>
    <property type="project" value="GO_Central"/>
</dbReference>
<dbReference type="GO" id="GO:0005634">
    <property type="term" value="C:nucleus"/>
    <property type="evidence" value="ECO:0000318"/>
    <property type="project" value="GO_Central"/>
</dbReference>
<dbReference type="GO" id="GO:0005524">
    <property type="term" value="F:ATP binding"/>
    <property type="evidence" value="ECO:0007669"/>
    <property type="project" value="UniProtKB-KW"/>
</dbReference>
<dbReference type="GO" id="GO:0016887">
    <property type="term" value="F:ATP hydrolysis activity"/>
    <property type="evidence" value="ECO:0007669"/>
    <property type="project" value="InterPro"/>
</dbReference>
<dbReference type="GO" id="GO:0003677">
    <property type="term" value="F:DNA binding"/>
    <property type="evidence" value="ECO:0007669"/>
    <property type="project" value="InterPro"/>
</dbReference>
<dbReference type="GO" id="GO:0006281">
    <property type="term" value="P:DNA repair"/>
    <property type="evidence" value="ECO:0000318"/>
    <property type="project" value="GO_Central"/>
</dbReference>
<dbReference type="GO" id="GO:0006261">
    <property type="term" value="P:DNA-templated DNA replication"/>
    <property type="evidence" value="ECO:0000318"/>
    <property type="project" value="GO_Central"/>
</dbReference>
<dbReference type="CDD" id="cd00009">
    <property type="entry name" value="AAA"/>
    <property type="match status" value="1"/>
</dbReference>
<dbReference type="CDD" id="cd18140">
    <property type="entry name" value="HLD_clamp_RFC"/>
    <property type="match status" value="1"/>
</dbReference>
<dbReference type="FunFam" id="1.20.272.10:FF:000009">
    <property type="entry name" value="replication factor C subunit 2"/>
    <property type="match status" value="1"/>
</dbReference>
<dbReference type="FunFam" id="1.10.8.60:FF:000012">
    <property type="entry name" value="Replication factor C subunit 4"/>
    <property type="match status" value="1"/>
</dbReference>
<dbReference type="FunFam" id="3.40.50.300:FF:000107">
    <property type="entry name" value="Replication factor C subunit 4"/>
    <property type="match status" value="1"/>
</dbReference>
<dbReference type="Gene3D" id="1.10.8.60">
    <property type="match status" value="1"/>
</dbReference>
<dbReference type="Gene3D" id="1.20.272.10">
    <property type="match status" value="1"/>
</dbReference>
<dbReference type="Gene3D" id="3.40.50.300">
    <property type="entry name" value="P-loop containing nucleotide triphosphate hydrolases"/>
    <property type="match status" value="1"/>
</dbReference>
<dbReference type="InterPro" id="IPR003593">
    <property type="entry name" value="AAA+_ATPase"/>
</dbReference>
<dbReference type="InterPro" id="IPR003959">
    <property type="entry name" value="ATPase_AAA_core"/>
</dbReference>
<dbReference type="InterPro" id="IPR008921">
    <property type="entry name" value="DNA_pol3_clamp-load_cplx_C"/>
</dbReference>
<dbReference type="InterPro" id="IPR050238">
    <property type="entry name" value="DNA_Rep/Repair_Clamp_Loader"/>
</dbReference>
<dbReference type="InterPro" id="IPR027417">
    <property type="entry name" value="P-loop_NTPase"/>
</dbReference>
<dbReference type="InterPro" id="IPR013748">
    <property type="entry name" value="Rep_factorC_C"/>
</dbReference>
<dbReference type="InterPro" id="IPR047854">
    <property type="entry name" value="RFC_lid"/>
</dbReference>
<dbReference type="NCBIfam" id="NF001679">
    <property type="entry name" value="PRK00440.1"/>
    <property type="match status" value="1"/>
</dbReference>
<dbReference type="PANTHER" id="PTHR11669">
    <property type="entry name" value="REPLICATION FACTOR C / DNA POLYMERASE III GAMMA-TAU SUBUNIT"/>
    <property type="match status" value="1"/>
</dbReference>
<dbReference type="PANTHER" id="PTHR11669:SF5">
    <property type="entry name" value="REPLICATION FACTOR C SUBUNIT 2"/>
    <property type="match status" value="1"/>
</dbReference>
<dbReference type="Pfam" id="PF00004">
    <property type="entry name" value="AAA"/>
    <property type="match status" value="1"/>
</dbReference>
<dbReference type="Pfam" id="PF08542">
    <property type="entry name" value="Rep_fac_C"/>
    <property type="match status" value="1"/>
</dbReference>
<dbReference type="SMART" id="SM00382">
    <property type="entry name" value="AAA"/>
    <property type="match status" value="1"/>
</dbReference>
<dbReference type="SUPFAM" id="SSF52540">
    <property type="entry name" value="P-loop containing nucleoside triphosphate hydrolases"/>
    <property type="match status" value="1"/>
</dbReference>
<dbReference type="SUPFAM" id="SSF48019">
    <property type="entry name" value="post-AAA+ oligomerization domain-like"/>
    <property type="match status" value="1"/>
</dbReference>
<accession>Q7XRX1</accession>
<accession>Q948P2</accession>
<feature type="chain" id="PRO_0000422637" description="Replication factor C subunit 4">
    <location>
        <begin position="1"/>
        <end position="335"/>
    </location>
</feature>
<feature type="binding site" evidence="2">
    <location>
        <begin position="56"/>
        <end position="63"/>
    </location>
    <ligand>
        <name>ATP</name>
        <dbReference type="ChEBI" id="CHEBI:30616"/>
    </ligand>
</feature>
<feature type="sequence conflict" description="In Ref. 1; BAB69675." evidence="4" ref="1">
    <original>D</original>
    <variation>A</variation>
    <location>
        <position position="2"/>
    </location>
</feature>
<feature type="sequence conflict" description="In Ref. 1; BAB69675." evidence="4" ref="1">
    <original>D</original>
    <variation>A</variation>
    <location>
        <position position="10"/>
    </location>
</feature>
<feature type="sequence conflict" description="In Ref. 1; BAB69675." evidence="4" ref="1">
    <original>G</original>
    <variation>V</variation>
    <location>
        <position position="32"/>
    </location>
</feature>
<feature type="sequence conflict" description="In Ref. 1; BAB69675." evidence="4" ref="1">
    <original>D</original>
    <variation>V</variation>
    <location>
        <position position="43"/>
    </location>
</feature>
<reference key="1">
    <citation type="journal article" date="2003" name="Plant Mol. Biol.">
        <title>Characterization of all the subunits of replication factor C from a higher plant, rice (Oryza sativa L.), and their relation to development.</title>
        <authorList>
            <person name="Furukawa T."/>
            <person name="Ishibashi T."/>
            <person name="Kimura S."/>
            <person name="Tanaka H."/>
            <person name="Hashimoto J."/>
            <person name="Sakaguchi K."/>
        </authorList>
    </citation>
    <scope>NUCLEOTIDE SEQUENCE [MRNA]</scope>
    <scope>TISSUE SPECIFICITY</scope>
    <scope>INDUCTION</scope>
    <scope>GENE FAMILY</scope>
    <source>
        <strain>cv. Nipponbare</strain>
    </source>
</reference>
<reference key="2">
    <citation type="journal article" date="2002" name="Nature">
        <title>Sequence and analysis of rice chromosome 4.</title>
        <authorList>
            <person name="Feng Q."/>
            <person name="Zhang Y."/>
            <person name="Hao P."/>
            <person name="Wang S."/>
            <person name="Fu G."/>
            <person name="Huang Y."/>
            <person name="Li Y."/>
            <person name="Zhu J."/>
            <person name="Liu Y."/>
            <person name="Hu X."/>
            <person name="Jia P."/>
            <person name="Zhang Y."/>
            <person name="Zhao Q."/>
            <person name="Ying K."/>
            <person name="Yu S."/>
            <person name="Tang Y."/>
            <person name="Weng Q."/>
            <person name="Zhang L."/>
            <person name="Lu Y."/>
            <person name="Mu J."/>
            <person name="Lu Y."/>
            <person name="Zhang L.S."/>
            <person name="Yu Z."/>
            <person name="Fan D."/>
            <person name="Liu X."/>
            <person name="Lu T."/>
            <person name="Li C."/>
            <person name="Wu Y."/>
            <person name="Sun T."/>
            <person name="Lei H."/>
            <person name="Li T."/>
            <person name="Hu H."/>
            <person name="Guan J."/>
            <person name="Wu M."/>
            <person name="Zhang R."/>
            <person name="Zhou B."/>
            <person name="Chen Z."/>
            <person name="Chen L."/>
            <person name="Jin Z."/>
            <person name="Wang R."/>
            <person name="Yin H."/>
            <person name="Cai Z."/>
            <person name="Ren S."/>
            <person name="Lv G."/>
            <person name="Gu W."/>
            <person name="Zhu G."/>
            <person name="Tu Y."/>
            <person name="Jia J."/>
            <person name="Zhang Y."/>
            <person name="Chen J."/>
            <person name="Kang H."/>
            <person name="Chen X."/>
            <person name="Shao C."/>
            <person name="Sun Y."/>
            <person name="Hu Q."/>
            <person name="Zhang X."/>
            <person name="Zhang W."/>
            <person name="Wang L."/>
            <person name="Ding C."/>
            <person name="Sheng H."/>
            <person name="Gu J."/>
            <person name="Chen S."/>
            <person name="Ni L."/>
            <person name="Zhu F."/>
            <person name="Chen W."/>
            <person name="Lan L."/>
            <person name="Lai Y."/>
            <person name="Cheng Z."/>
            <person name="Gu M."/>
            <person name="Jiang J."/>
            <person name="Li J."/>
            <person name="Hong G."/>
            <person name="Xue Y."/>
            <person name="Han B."/>
        </authorList>
    </citation>
    <scope>NUCLEOTIDE SEQUENCE [LARGE SCALE GENOMIC DNA]</scope>
    <source>
        <strain>cv. Nipponbare</strain>
    </source>
</reference>
<reference key="3">
    <citation type="journal article" date="2005" name="Nature">
        <title>The map-based sequence of the rice genome.</title>
        <authorList>
            <consortium name="International rice genome sequencing project (IRGSP)"/>
        </authorList>
    </citation>
    <scope>NUCLEOTIDE SEQUENCE [LARGE SCALE GENOMIC DNA]</scope>
    <source>
        <strain>cv. Nipponbare</strain>
    </source>
</reference>
<reference key="4">
    <citation type="journal article" date="2008" name="Nucleic Acids Res.">
        <title>The rice annotation project database (RAP-DB): 2008 update.</title>
        <authorList>
            <consortium name="The rice annotation project (RAP)"/>
        </authorList>
    </citation>
    <scope>GENOME REANNOTATION</scope>
    <source>
        <strain>cv. Nipponbare</strain>
    </source>
</reference>
<reference key="5">
    <citation type="journal article" date="2013" name="Rice">
        <title>Improvement of the Oryza sativa Nipponbare reference genome using next generation sequence and optical map data.</title>
        <authorList>
            <person name="Kawahara Y."/>
            <person name="de la Bastide M."/>
            <person name="Hamilton J.P."/>
            <person name="Kanamori H."/>
            <person name="McCombie W.R."/>
            <person name="Ouyang S."/>
            <person name="Schwartz D.C."/>
            <person name="Tanaka T."/>
            <person name="Wu J."/>
            <person name="Zhou S."/>
            <person name="Childs K.L."/>
            <person name="Davidson R.M."/>
            <person name="Lin H."/>
            <person name="Quesada-Ocampo L."/>
            <person name="Vaillancourt B."/>
            <person name="Sakai H."/>
            <person name="Lee S.S."/>
            <person name="Kim J."/>
            <person name="Numa H."/>
            <person name="Itoh T."/>
            <person name="Buell C.R."/>
            <person name="Matsumoto T."/>
        </authorList>
    </citation>
    <scope>GENOME REANNOTATION</scope>
    <source>
        <strain>cv. Nipponbare</strain>
    </source>
</reference>
<name>RFC4_ORYSJ</name>